<accession>P27479</accession>
<accession>F1MCH9</accession>
<proteinExistence type="evidence at protein level"/>
<protein>
    <recommendedName>
        <fullName evidence="3">Polyunsaturated fatty acid lipoxygenase ALOX15</fullName>
    </recommendedName>
    <alternativeName>
        <fullName evidence="5">12/15-lipoxygenase</fullName>
    </alternativeName>
    <alternativeName>
        <fullName evidence="6">Arachidonate 12-lipoxygenase, leukocyte-type</fullName>
        <shortName>12-LOX</shortName>
        <ecNumber evidence="9">1.13.11.31</ecNumber>
    </alternativeName>
    <alternativeName>
        <fullName>Arachidonate 15-lipoxygenase</fullName>
        <shortName>15-LOX</shortName>
        <ecNumber evidence="9">1.13.11.33</ecNumber>
    </alternativeName>
    <alternativeName>
        <fullName evidence="3">Arachidonate omega-6 lipoxygenase</fullName>
    </alternativeName>
    <alternativeName>
        <fullName evidence="2">Erythroid cell-specific 15-lipoxygenase</fullName>
    </alternativeName>
    <alternativeName>
        <fullName evidence="6">Hepoxilin A3 synthase Alox15</fullName>
        <ecNumber evidence="6">1.13.11.-</ecNumber>
    </alternativeName>
    <alternativeName>
        <fullName evidence="3">Linoleate 13S-lipoxygenase</fullName>
        <ecNumber evidence="3">1.13.11.12</ecNumber>
    </alternativeName>
</protein>
<name>LOX15_BOVIN</name>
<reference key="1">
    <citation type="journal article" date="1992" name="Am. J. Physiol.">
        <title>Cloning and expression of an airway epithelial 12-lipoxygenase.</title>
        <authorList>
            <person name="de Marzo N."/>
            <person name="Sloan D.L."/>
            <person name="Dicharry S."/>
            <person name="Highland E."/>
            <person name="Sigal E."/>
        </authorList>
    </citation>
    <scope>NUCLEOTIDE SEQUENCE [MRNA]</scope>
    <scope>FUNCTION</scope>
    <scope>CATALYTIC ACTIVITY</scope>
    <scope>PATHWAY</scope>
    <scope>TISSUE SPECIFICITY</scope>
    <source>
        <tissue>Tracheal epithelium</tissue>
    </source>
</reference>
<reference key="2">
    <citation type="journal article" date="2009" name="Genome Biol.">
        <title>A whole-genome assembly of the domestic cow, Bos taurus.</title>
        <authorList>
            <person name="Zimin A.V."/>
            <person name="Delcher A.L."/>
            <person name="Florea L."/>
            <person name="Kelley D.R."/>
            <person name="Schatz M.C."/>
            <person name="Puiu D."/>
            <person name="Hanrahan F."/>
            <person name="Pertea G."/>
            <person name="Van Tassell C.P."/>
            <person name="Sonstegard T.S."/>
            <person name="Marcais G."/>
            <person name="Roberts M."/>
            <person name="Subramanian P."/>
            <person name="Yorke J.A."/>
            <person name="Salzberg S.L."/>
        </authorList>
    </citation>
    <scope>NUCLEOTIDE SEQUENCE [LARGE SCALE GENOMIC DNA]</scope>
    <source>
        <strain>Hereford</strain>
    </source>
</reference>
<keyword id="KW-0106">Calcium</keyword>
<keyword id="KW-1003">Cell membrane</keyword>
<keyword id="KW-0963">Cytoplasm</keyword>
<keyword id="KW-0223">Dioxygenase</keyword>
<keyword id="KW-0276">Fatty acid metabolism</keyword>
<keyword id="KW-0408">Iron</keyword>
<keyword id="KW-0551">Lipid droplet</keyword>
<keyword id="KW-0443">Lipid metabolism</keyword>
<keyword id="KW-0446">Lipid-binding</keyword>
<keyword id="KW-0472">Membrane</keyword>
<keyword id="KW-0479">Metal-binding</keyword>
<keyword id="KW-0560">Oxidoreductase</keyword>
<keyword id="KW-1185">Reference proteome</keyword>
<sequence length="663" mass="75124">MGLYRVRVSTGSSFCAGSNNQVHLWLVGEHGEAALGWRLRPARGKEVEFQVDVSEYLGRLLFVKLRKRHLLSDDAWFCNWISVQGPGASGNEFRFPCYRWVEGDGILSLPEGTGRTVVDDPQGLFKKHREEELAERRKLYRWGNWKDGLILNIAGATINDLPVDERFLEDKRIDFEASLTKGLADLAIKDSLNILTCWKSLDDFNRIFWCGQSKLAERVRDSWKEDALFGYQFLNGTNPMLLRRSVRLPARLEFPPGMGELQAELEKELQQGTLFEADFSLLDGIKANVILCTQQYVAAPLVMLKLQPDGKLLPMAIQLQLPHKGSPPPPLFLPTDPPMTWLLAKCWVRSSDFQLHELHSHLLRGHLVAEVIAVATMRCLPSIHPMFKLLIPHLRYTMEINIRARTGLVSDSGVFDQVVSTGGGGHVELLQRAGAFLTYSSFCPPDDLADRGLLGVKSSFYAQDALRLWEILSRYVEGIVSLHYKTDESVRDDIELQAWCRDITEIGLLGAQDRGFPVTLQSKDQLCHFVTMCIFTCTGQHSSTHLGQLDWYSWVPNAPCTMRLPPPTTKDVTLEKVMATLPNFHQASLQMSITWQLGRRQPIMVALGQHEEEYFSGPEPKAVLKKFREELAALEKDIEIRNAQLDWPYEYLRPSLVENSVAI</sequence>
<gene>
    <name evidence="3" type="primary">ALOX15</name>
</gene>
<evidence type="ECO:0000250" key="1"/>
<evidence type="ECO:0000250" key="2">
    <source>
        <dbReference type="UniProtKB" id="P12530"/>
    </source>
</evidence>
<evidence type="ECO:0000250" key="3">
    <source>
        <dbReference type="UniProtKB" id="P16050"/>
    </source>
</evidence>
<evidence type="ECO:0000250" key="4">
    <source>
        <dbReference type="UniProtKB" id="P16469"/>
    </source>
</evidence>
<evidence type="ECO:0000250" key="5">
    <source>
        <dbReference type="UniProtKB" id="P39654"/>
    </source>
</evidence>
<evidence type="ECO:0000250" key="6">
    <source>
        <dbReference type="UniProtKB" id="Q02759"/>
    </source>
</evidence>
<evidence type="ECO:0000255" key="7">
    <source>
        <dbReference type="PROSITE-ProRule" id="PRU00152"/>
    </source>
</evidence>
<evidence type="ECO:0000255" key="8">
    <source>
        <dbReference type="PROSITE-ProRule" id="PRU00726"/>
    </source>
</evidence>
<evidence type="ECO:0000269" key="9">
    <source>
    </source>
</evidence>
<evidence type="ECO:0000305" key="10"/>
<comment type="function">
    <text evidence="3 5 6 9">Non-heme iron-containing dioxygenase that catalyzes the stereo-specific peroxidation of free and esterified polyunsaturated fatty acids generating a spectrum of bioactive lipid mediators. It inserts peroxyl groups at C12 or C15 of arachidonate ((5Z,8Z,11Z,14Z)-eicosatetraenoate) producing both 12-hydroperoxyeicosatetraenoate/12-HPETE and 15-hydroperoxyeicosatetraenoate/15-HPETE (PubMed:1539676). It may then act on 12-HPETE to produce hepoxilins, which may show pro-inflammatory properties (By similarity). Can also peroxidize linoleate ((9Z,12Z)-octadecadienoate) to 13-hydroperoxyoctadecadienoate. May participate in the sequential oxidations of DHA ((4Z,7Z,10Z,13Z,16Z,19Z)-docosahexaenoate) to generate specialized pro-resolving mediators (SPMs)like resolvin D5 ((7S,17S)-diHPDHA) and (7S,14S)-diHPDHA, that actively down-regulate the immune response and have anti-aggregation properties with platelets. Can convert epoxy fatty acids to hydroperoxy-epoxides derivatives followed by an intramolecular nucleophilic substitution leading to the formation of monocyclic endoperoxides (By similarity). Plays an important role during the maintenance of self-tolerance by peroxidizing membrane-bound phosphatidylethanolamine which can then signal the sorting process for clearance of apoptotic cells during inflammation and prevent an autoimmune response. In addition to its role in the immune and inflammatory responses, this enzyme may play a role in epithelial wound healing in the cornea through production of lipoxin A4 (LXA(4)) and docosahexaenoic acid-derived neuroprotectin D1 (NPD1; 10R,17S-HDHA), both lipid autacoids exhibit anti-inflammatory and neuroprotective properties. Furthermore, it may regulate actin polymerization which is crucial for several biological processes such as the phagocytosis of apoptotic cells. It is also implicated in the generation of endogenous ligands for peroxisome proliferator activated receptor (PPAR-gamma), hence modulating macrophage development and function. It may also exert a negative effect on skeletal development by regulating bone mass through this pathway. As well as participates in ER stress and downstream inflammation in adipocytes, pancreatic islets, and liver (By similarity). Finally, it is also involved in the cellular response to IL13/interleukin-13 (By similarity).</text>
</comment>
<comment type="catalytic activity">
    <reaction evidence="9">
        <text>(5Z,8Z,11Z,14Z)-eicosatetraenoate + O2 = (12S)-hydroperoxy-(5Z,8Z,10E,14Z)-eicosatetraenoate</text>
        <dbReference type="Rhea" id="RHEA:10428"/>
        <dbReference type="ChEBI" id="CHEBI:15379"/>
        <dbReference type="ChEBI" id="CHEBI:32395"/>
        <dbReference type="ChEBI" id="CHEBI:57444"/>
        <dbReference type="EC" id="1.13.11.31"/>
    </reaction>
</comment>
<comment type="catalytic activity">
    <reaction evidence="9">
        <text>(5Z,8Z,11Z,14Z)-eicosatetraenoate + O2 = (15S)-hydroperoxy-(5Z,8Z,11Z,13E)-eicosatetraenoate</text>
        <dbReference type="Rhea" id="RHEA:16869"/>
        <dbReference type="ChEBI" id="CHEBI:15379"/>
        <dbReference type="ChEBI" id="CHEBI:32395"/>
        <dbReference type="ChEBI" id="CHEBI:57446"/>
        <dbReference type="EC" id="1.13.11.33"/>
    </reaction>
</comment>
<comment type="catalytic activity">
    <reaction evidence="3">
        <text>(9Z,12Z)-octadecadienoate + O2 = (13S)-hydroperoxy-(9Z,11E)-octadecadienoate</text>
        <dbReference type="Rhea" id="RHEA:22780"/>
        <dbReference type="ChEBI" id="CHEBI:15379"/>
        <dbReference type="ChEBI" id="CHEBI:30245"/>
        <dbReference type="ChEBI" id="CHEBI:57466"/>
        <dbReference type="EC" id="1.13.11.12"/>
    </reaction>
    <physiologicalReaction direction="left-to-right" evidence="3">
        <dbReference type="Rhea" id="RHEA:22781"/>
    </physiologicalReaction>
</comment>
<comment type="catalytic activity">
    <reaction evidence="3">
        <text>(5Z,8Z,11Z,14Z)-eicosatetraenoate + 2 O2 = (14R,15S)-dihydroperoxy-(5Z,8Z,10E,12E)-eicosatetraenoate</text>
        <dbReference type="Rhea" id="RHEA:50928"/>
        <dbReference type="ChEBI" id="CHEBI:15379"/>
        <dbReference type="ChEBI" id="CHEBI:32395"/>
        <dbReference type="ChEBI" id="CHEBI:133900"/>
    </reaction>
    <physiologicalReaction direction="left-to-right" evidence="3">
        <dbReference type="Rhea" id="RHEA:50929"/>
    </physiologicalReaction>
</comment>
<comment type="catalytic activity">
    <reaction evidence="3">
        <text>(5Z,8Z,11Z,14Z)-eicosatetraenoate + 2 O2 = (8S,15S)-dihydroperoxy-(5Z,9E,11Z,13E)-eicosatetraenoate</text>
        <dbReference type="Rhea" id="RHEA:50924"/>
        <dbReference type="ChEBI" id="CHEBI:15379"/>
        <dbReference type="ChEBI" id="CHEBI:32395"/>
        <dbReference type="ChEBI" id="CHEBI:133899"/>
    </reaction>
    <physiologicalReaction direction="left-to-right" evidence="3">
        <dbReference type="Rhea" id="RHEA:50925"/>
    </physiologicalReaction>
</comment>
<comment type="catalytic activity">
    <reaction evidence="3">
        <text>(14S,15R)-epoxy-(5Z,8Z,11Z)-eicosatrienoate + O2 = (8S)-hydroperoxy-(14S,15R)-epoxy-(5Z,9E,11Z)-eicosatrienoate</text>
        <dbReference type="Rhea" id="RHEA:50288"/>
        <dbReference type="ChEBI" id="CHEBI:15379"/>
        <dbReference type="ChEBI" id="CHEBI:131964"/>
        <dbReference type="ChEBI" id="CHEBI:132068"/>
    </reaction>
    <physiologicalReaction direction="left-to-right" evidence="3">
        <dbReference type="Rhea" id="RHEA:50289"/>
    </physiologicalReaction>
</comment>
<comment type="catalytic activity">
    <reaction evidence="3">
        <text>(14S,15R)-epoxy-(5Z,8Z,11Z)-eicosatrienoate + O2 = (12S)-hydroperoxy-(14S,15R)-epoxy-(5Z,8Z,10E)-eicosatrienoate</text>
        <dbReference type="Rhea" id="RHEA:50284"/>
        <dbReference type="ChEBI" id="CHEBI:15379"/>
        <dbReference type="ChEBI" id="CHEBI:131964"/>
        <dbReference type="ChEBI" id="CHEBI:132065"/>
    </reaction>
    <physiologicalReaction direction="left-to-right" evidence="3">
        <dbReference type="Rhea" id="RHEA:50285"/>
    </physiologicalReaction>
</comment>
<comment type="catalytic activity">
    <reaction evidence="3">
        <text>(14R,15S)-epoxy-(5Z,8Z,11Z)-eicosatrienoate + O2 = (5S)-hydroperoxy-(14R,15S)-epoxy-(6E,8Z,11Z)-eicosatrienoate</text>
        <dbReference type="Rhea" id="RHEA:50280"/>
        <dbReference type="ChEBI" id="CHEBI:15379"/>
        <dbReference type="ChEBI" id="CHEBI:131965"/>
        <dbReference type="ChEBI" id="CHEBI:132067"/>
    </reaction>
    <physiologicalReaction direction="left-to-right" evidence="3">
        <dbReference type="Rhea" id="RHEA:50281"/>
    </physiologicalReaction>
</comment>
<comment type="catalytic activity">
    <reaction evidence="3">
        <text>(14R,15S)-epoxy-(5Z,8Z,11Z)-eicosatrienoate + O2 = (12S)-hydroperoxy-(14R,15S)-epoxy-(5Z,8Z,10E)-eicosatrienoate</text>
        <dbReference type="Rhea" id="RHEA:50276"/>
        <dbReference type="ChEBI" id="CHEBI:15379"/>
        <dbReference type="ChEBI" id="CHEBI:131965"/>
        <dbReference type="ChEBI" id="CHEBI:132063"/>
    </reaction>
    <physiologicalReaction direction="left-to-right" evidence="3">
        <dbReference type="Rhea" id="RHEA:50277"/>
    </physiologicalReaction>
</comment>
<comment type="catalytic activity">
    <reaction evidence="3">
        <text>(15R)-hydroperoxy-(5Z,8Z,11Z,13E)-eicosatetraenoate = 15-oxo-(5Z,8Z,11Z,13E)-eicosatetraenoate + H2O</text>
        <dbReference type="Rhea" id="RHEA:50152"/>
        <dbReference type="ChEBI" id="CHEBI:15377"/>
        <dbReference type="ChEBI" id="CHEBI:57410"/>
        <dbReference type="ChEBI" id="CHEBI:82626"/>
    </reaction>
    <physiologicalReaction direction="left-to-right" evidence="3">
        <dbReference type="Rhea" id="RHEA:50153"/>
    </physiologicalReaction>
</comment>
<comment type="catalytic activity">
    <reaction evidence="3">
        <text>(15S)-hydroperoxy-(5Z,8Z,11Z,13E)-eicosatetraenoate = (14S,15S)-epoxy-(5Z,8Z,10E,12E)-eicosatetraenoate + H2O</text>
        <dbReference type="Rhea" id="RHEA:50140"/>
        <dbReference type="ChEBI" id="CHEBI:15377"/>
        <dbReference type="ChEBI" id="CHEBI:57446"/>
        <dbReference type="ChEBI" id="CHEBI:132070"/>
    </reaction>
    <physiologicalReaction direction="left-to-right" evidence="3">
        <dbReference type="Rhea" id="RHEA:50141"/>
    </physiologicalReaction>
</comment>
<comment type="catalytic activity">
    <reaction evidence="6">
        <text>(12S)-hydroperoxy-(5Z,8Z,10E,14Z)-eicosatetraenoate = (8S)-hydroxy-(11S,12S)-epoxy-(5Z,9E,14Z)-eicosatrienoate</text>
        <dbReference type="Rhea" id="RHEA:50216"/>
        <dbReference type="ChEBI" id="CHEBI:57444"/>
        <dbReference type="ChEBI" id="CHEBI:132129"/>
    </reaction>
    <physiologicalReaction direction="left-to-right" evidence="6">
        <dbReference type="Rhea" id="RHEA:50217"/>
    </physiologicalReaction>
</comment>
<comment type="catalytic activity">
    <reaction evidence="4">
        <text>(4Z,7Z,10Z,13Z,16Z)-docosapentaenoate + O2 = 14-hydroperoxy-(4Z,7Z,10Z,12E,16Z)-docosapentaenoate</text>
        <dbReference type="Rhea" id="RHEA:50824"/>
        <dbReference type="ChEBI" id="CHEBI:15379"/>
        <dbReference type="ChEBI" id="CHEBI:77226"/>
        <dbReference type="ChEBI" id="CHEBI:133799"/>
    </reaction>
    <physiologicalReaction direction="left-to-right" evidence="4">
        <dbReference type="Rhea" id="RHEA:50825"/>
    </physiologicalReaction>
</comment>
<comment type="catalytic activity">
    <reaction evidence="4">
        <text>(7Z,10Z,13Z,16Z,19Z)-docosapentaenoate + O2 = 14-hydroperoxy-(7Z,10Z,12E,16Z,19Z)-docosapentaenoate</text>
        <dbReference type="Rhea" id="RHEA:50836"/>
        <dbReference type="ChEBI" id="CHEBI:15379"/>
        <dbReference type="ChEBI" id="CHEBI:77224"/>
        <dbReference type="ChEBI" id="CHEBI:133798"/>
    </reaction>
    <physiologicalReaction direction="left-to-right" evidence="4">
        <dbReference type="Rhea" id="RHEA:50837"/>
    </physiologicalReaction>
</comment>
<comment type="catalytic activity">
    <reaction evidence="3">
        <text>(4Z,7Z,10Z,13Z,16Z,19Z)-docosahexaenoate + O2 = (14S)-hydroperoxy-(4Z,7Z,10Z,12E,16Z,19Z)-docosahexaenoate</text>
        <dbReference type="Rhea" id="RHEA:41332"/>
        <dbReference type="ChEBI" id="CHEBI:15379"/>
        <dbReference type="ChEBI" id="CHEBI:77016"/>
        <dbReference type="ChEBI" id="CHEBI:78048"/>
    </reaction>
    <physiologicalReaction direction="left-to-right" evidence="3">
        <dbReference type="Rhea" id="RHEA:41333"/>
    </physiologicalReaction>
</comment>
<comment type="catalytic activity">
    <reaction evidence="3">
        <text>(4Z,7Z,10Z,13Z,16Z,19Z)-docosahexaenoate + O2 = (17S)-hydroperoxy-(4Z,7Z,10Z,13Z,15E,19Z)-docosahexaenoate</text>
        <dbReference type="Rhea" id="RHEA:50840"/>
        <dbReference type="ChEBI" id="CHEBI:15379"/>
        <dbReference type="ChEBI" id="CHEBI:77016"/>
        <dbReference type="ChEBI" id="CHEBI:133795"/>
    </reaction>
    <physiologicalReaction direction="left-to-right" evidence="3">
        <dbReference type="Rhea" id="RHEA:50841"/>
    </physiologicalReaction>
</comment>
<comment type="catalytic activity">
    <reaction evidence="3">
        <text>(7S)-hydroperoxy-(4Z,8E,10Z,13Z,16Z,19Z)-docosahexaenoate + O2 = (7S,14S)-dihydroperoxy-(4Z,8E,10Z,12E,16Z,19Z)-docosahexaenoate</text>
        <dbReference type="Rhea" id="RHEA:64724"/>
        <dbReference type="ChEBI" id="CHEBI:15379"/>
        <dbReference type="ChEBI" id="CHEBI:156049"/>
        <dbReference type="ChEBI" id="CHEBI:156082"/>
    </reaction>
    <physiologicalReaction direction="left-to-right" evidence="3">
        <dbReference type="Rhea" id="RHEA:64725"/>
    </physiologicalReaction>
</comment>
<comment type="catalytic activity">
    <reaction evidence="3">
        <text>(7S)-hydroperoxy-(4Z,8E,10Z,13Z,16Z,19Z)-docosahexaenoate + O2 = (7S,17S)-dihydroperoxy-(4Z,8E,10Z,13Z,15E,19Z)-docosahexaenoate</text>
        <dbReference type="Rhea" id="RHEA:64728"/>
        <dbReference type="ChEBI" id="CHEBI:15379"/>
        <dbReference type="ChEBI" id="CHEBI:140349"/>
        <dbReference type="ChEBI" id="CHEBI:156049"/>
    </reaction>
    <physiologicalReaction direction="left-to-right" evidence="3">
        <dbReference type="Rhea" id="RHEA:64729"/>
    </physiologicalReaction>
</comment>
<comment type="catalytic activity">
    <reaction evidence="3">
        <text>(4Z,7Z,10Z,13Z,16Z,19Z)-docosahexaenoate + O2 = (11S)-hydroperoxy-(4Z,7Z,9E,13Z,16Z,19Z)-docosahexaenoate</text>
        <dbReference type="Rhea" id="RHEA:64732"/>
        <dbReference type="ChEBI" id="CHEBI:15379"/>
        <dbReference type="ChEBI" id="CHEBI:77016"/>
        <dbReference type="ChEBI" id="CHEBI:156131"/>
    </reaction>
    <physiologicalReaction direction="left-to-right" evidence="3">
        <dbReference type="Rhea" id="RHEA:64733"/>
    </physiologicalReaction>
</comment>
<comment type="catalytic activity">
    <reaction evidence="4">
        <text>N-(5Z,8Z,11Z,14Z)-eicosatetraenoyl-taurine + O2 = N-(12S)-hydroperoxy-(5Z,8Z,10E,14Z)-eicosatetraenoyl-taurine</text>
        <dbReference type="Rhea" id="RHEA:50160"/>
        <dbReference type="ChEBI" id="CHEBI:15379"/>
        <dbReference type="ChEBI" id="CHEBI:132060"/>
        <dbReference type="ChEBI" id="CHEBI:132061"/>
    </reaction>
    <physiologicalReaction direction="left-to-right" evidence="4">
        <dbReference type="Rhea" id="RHEA:50161"/>
    </physiologicalReaction>
</comment>
<comment type="catalytic activity">
    <reaction evidence="4">
        <text>N-(5Z,8Z,11Z,14Z)-eicosatetraenoyl-gamma-aminobutanoate + O2 = N-(12S)-hydroperoxy-(5Z,8Z,10E,14Z)-eicosatetraenoyl-gamma-aminobutanoate</text>
        <dbReference type="Rhea" id="RHEA:50176"/>
        <dbReference type="ChEBI" id="CHEBI:15379"/>
        <dbReference type="ChEBI" id="CHEBI:132072"/>
        <dbReference type="ChEBI" id="CHEBI:132075"/>
    </reaction>
    <physiologicalReaction direction="left-to-right" evidence="4">
        <dbReference type="Rhea" id="RHEA:50177"/>
    </physiologicalReaction>
</comment>
<comment type="catalytic activity">
    <reaction evidence="4">
        <text>N-(5Z,8Z,11Z,14Z)-eicosatetraenoyl-glycine + O2 = N-(12S)-hydroperoxy-(5Z,8Z,10E,14Z)-eicosatetraenoyl-glycine</text>
        <dbReference type="Rhea" id="RHEA:50168"/>
        <dbReference type="ChEBI" id="CHEBI:15379"/>
        <dbReference type="ChEBI" id="CHEBI:59002"/>
        <dbReference type="ChEBI" id="CHEBI:132073"/>
    </reaction>
    <physiologicalReaction direction="left-to-right" evidence="4">
        <dbReference type="Rhea" id="RHEA:50169"/>
    </physiologicalReaction>
</comment>
<comment type="catalytic activity">
    <reaction evidence="4">
        <text>N-(5Z,8Z,11Z,14Z)-eicosatetraenoyl-L-alanine + O2 = N-(12S)-hydroperoxy-(5Z,8Z,10E,14Z)-eicosatetraenoyl-alanine</text>
        <dbReference type="Rhea" id="RHEA:50172"/>
        <dbReference type="ChEBI" id="CHEBI:15379"/>
        <dbReference type="ChEBI" id="CHEBI:132071"/>
        <dbReference type="ChEBI" id="CHEBI:132074"/>
    </reaction>
    <physiologicalReaction direction="left-to-right" evidence="4">
        <dbReference type="Rhea" id="RHEA:50173"/>
    </physiologicalReaction>
</comment>
<comment type="catalytic activity">
    <reaction evidence="2">
        <text>N-(5Z,8Z,11Z,14Z)-eicosatetraenoyl-taurine + O2 = N-(15S)-hydroperoxy-(5Z,8Z,11Z,13E)-eicosatetraenoyl-taurine</text>
        <dbReference type="Rhea" id="RHEA:50156"/>
        <dbReference type="ChEBI" id="CHEBI:15379"/>
        <dbReference type="ChEBI" id="CHEBI:132060"/>
        <dbReference type="ChEBI" id="CHEBI:132062"/>
    </reaction>
    <physiologicalReaction direction="left-to-right" evidence="2">
        <dbReference type="Rhea" id="RHEA:50157"/>
    </physiologicalReaction>
</comment>
<comment type="catalytic activity">
    <reaction evidence="2">
        <text>N-(5Z,8Z,11Z,14Z)-eicosatetraenoyl-gamma-aminobutanoate + O2 = N-(15S)-hydroperoxy-(5Z,8Z,11Z,13E)-eicosatetraenoyl-gamma-aminobutanoate</text>
        <dbReference type="Rhea" id="RHEA:50180"/>
        <dbReference type="ChEBI" id="CHEBI:15379"/>
        <dbReference type="ChEBI" id="CHEBI:132072"/>
        <dbReference type="ChEBI" id="CHEBI:132078"/>
    </reaction>
    <physiologicalReaction direction="left-to-right" evidence="2">
        <dbReference type="Rhea" id="RHEA:50181"/>
    </physiologicalReaction>
</comment>
<comment type="catalytic activity">
    <reaction evidence="2">
        <text>N-(5Z,8Z,11Z,14Z)-eicosatetraenoyl-glycine + O2 = N-(15S)-hydroperoxy-(5Z,8Z,11Z,13E)-eicosatetraenoyl-glycine</text>
        <dbReference type="Rhea" id="RHEA:50188"/>
        <dbReference type="ChEBI" id="CHEBI:15379"/>
        <dbReference type="ChEBI" id="CHEBI:59002"/>
        <dbReference type="ChEBI" id="CHEBI:132076"/>
    </reaction>
    <physiologicalReaction direction="left-to-right" evidence="2">
        <dbReference type="Rhea" id="RHEA:50189"/>
    </physiologicalReaction>
</comment>
<comment type="catalytic activity">
    <reaction evidence="2">
        <text>N-(5Z,8Z,11Z,14Z)-eicosatetraenoyl-L-alanine + O2 = N-(15S)-hydroperoxy-(5Z,8Z,11Z,13E)-eicosatetraenoyl-alanine</text>
        <dbReference type="Rhea" id="RHEA:50184"/>
        <dbReference type="ChEBI" id="CHEBI:15379"/>
        <dbReference type="ChEBI" id="CHEBI:132071"/>
        <dbReference type="ChEBI" id="CHEBI:132077"/>
    </reaction>
    <physiologicalReaction direction="left-to-right" evidence="2">
        <dbReference type="Rhea" id="RHEA:50185"/>
    </physiologicalReaction>
</comment>
<comment type="cofactor">
    <cofactor evidence="4 8">
        <name>Fe cation</name>
        <dbReference type="ChEBI" id="CHEBI:24875"/>
    </cofactor>
    <text evidence="4 8">Binds 1 Fe cation per subunit.</text>
</comment>
<comment type="pathway">
    <text evidence="9">Lipid metabolism; hydroperoxy eicosatetraenoic acid biosynthesis.</text>
</comment>
<comment type="subunit">
    <text evidence="3">Interacts with PEBP1; in response to IL13/interleukin-13, prevents the interaction of PEBP1 with RAF1 to activate the ERK signaling cascade.</text>
</comment>
<comment type="subcellular location">
    <subcellularLocation>
        <location evidence="3">Cytoplasm</location>
        <location evidence="3">Cytosol</location>
    </subcellularLocation>
    <subcellularLocation>
        <location evidence="3">Cell membrane</location>
        <topology evidence="3">Peripheral membrane protein</topology>
    </subcellularLocation>
    <subcellularLocation>
        <location evidence="3">Lipid droplet</location>
    </subcellularLocation>
    <text evidence="5">Predominantly cytosolic; becomes enriched at membranes upon calcium binding. Translocates from the cytosol to the plasma membrane when stimulated by IL13/interleukin-13 and in macrophages binding apoptotic cells.</text>
</comment>
<comment type="tissue specificity">
    <text evidence="9">Detected in tracheal epithelium.</text>
</comment>
<comment type="domain">
    <text evidence="1">The PLAT domain can bind calcium ions; this promotes association with membranes.</text>
</comment>
<comment type="similarity">
    <text evidence="10">Belongs to the lipoxygenase family.</text>
</comment>
<comment type="sequence caution" evidence="10">
    <conflict type="miscellaneous discrepancy">
        <sequence resource="EMBL-CDS" id="AAB21522"/>
    </conflict>
    <text>Probable cloning artifact.</text>
</comment>
<feature type="chain" id="PRO_0000220681" description="Polyunsaturated fatty acid lipoxygenase ALOX15">
    <location>
        <begin position="1"/>
        <end position="663"/>
    </location>
</feature>
<feature type="domain" description="PLAT" evidence="7">
    <location>
        <begin position="2"/>
        <end position="115"/>
    </location>
</feature>
<feature type="domain" description="Lipoxygenase" evidence="8">
    <location>
        <begin position="116"/>
        <end position="663"/>
    </location>
</feature>
<feature type="binding site" evidence="8">
    <location>
        <position position="361"/>
    </location>
    <ligand>
        <name>Fe cation</name>
        <dbReference type="ChEBI" id="CHEBI:24875"/>
        <note>catalytic</note>
    </ligand>
</feature>
<feature type="binding site" evidence="8">
    <location>
        <position position="366"/>
    </location>
    <ligand>
        <name>Fe cation</name>
        <dbReference type="ChEBI" id="CHEBI:24875"/>
        <note>catalytic</note>
    </ligand>
</feature>
<feature type="binding site" evidence="8">
    <location>
        <position position="541"/>
    </location>
    <ligand>
        <name>Fe cation</name>
        <dbReference type="ChEBI" id="CHEBI:24875"/>
        <note>catalytic</note>
    </ligand>
</feature>
<feature type="binding site" evidence="8">
    <location>
        <position position="545"/>
    </location>
    <ligand>
        <name>Fe cation</name>
        <dbReference type="ChEBI" id="CHEBI:24875"/>
        <note>catalytic</note>
    </ligand>
</feature>
<feature type="binding site" evidence="8">
    <location>
        <position position="663"/>
    </location>
    <ligand>
        <name>Fe cation</name>
        <dbReference type="ChEBI" id="CHEBI:24875"/>
        <note>catalytic</note>
    </ligand>
</feature>
<feature type="sequence conflict" description="In Ref. 1; AAA30346/AAB21522/AAC41614." evidence="10" ref="1">
    <original>RL</original>
    <variation>AV</variation>
    <location>
        <begin position="38"/>
        <end position="39"/>
    </location>
</feature>
<feature type="sequence conflict" description="In Ref. 1; AAA30346/AAB21522/AAC41614." evidence="10" ref="1">
    <original>D</original>
    <variation>M</variation>
    <location>
        <position position="283"/>
    </location>
</feature>
<organism>
    <name type="scientific">Bos taurus</name>
    <name type="common">Bovine</name>
    <dbReference type="NCBI Taxonomy" id="9913"/>
    <lineage>
        <taxon>Eukaryota</taxon>
        <taxon>Metazoa</taxon>
        <taxon>Chordata</taxon>
        <taxon>Craniata</taxon>
        <taxon>Vertebrata</taxon>
        <taxon>Euteleostomi</taxon>
        <taxon>Mammalia</taxon>
        <taxon>Eutheria</taxon>
        <taxon>Laurasiatheria</taxon>
        <taxon>Artiodactyla</taxon>
        <taxon>Ruminantia</taxon>
        <taxon>Pecora</taxon>
        <taxon>Bovidae</taxon>
        <taxon>Bovinae</taxon>
        <taxon>Bos</taxon>
    </lineage>
</organism>
<dbReference type="EC" id="1.13.11.31" evidence="9"/>
<dbReference type="EC" id="1.13.11.33" evidence="9"/>
<dbReference type="EC" id="1.13.11.-" evidence="6"/>
<dbReference type="EC" id="1.13.11.12" evidence="3"/>
<dbReference type="EMBL" id="M62516">
    <property type="protein sequence ID" value="AAC41614.1"/>
    <property type="molecule type" value="mRNA"/>
</dbReference>
<dbReference type="EMBL" id="M81320">
    <property type="protein sequence ID" value="AAA30346.1"/>
    <property type="molecule type" value="mRNA"/>
</dbReference>
<dbReference type="EMBL" id="S96247">
    <property type="protein sequence ID" value="AAB21522.2"/>
    <property type="status" value="ALT_SEQ"/>
    <property type="molecule type" value="mRNA"/>
</dbReference>
<dbReference type="EMBL" id="DAAA02048758">
    <property type="status" value="NOT_ANNOTATED_CDS"/>
    <property type="molecule type" value="Genomic_DNA"/>
</dbReference>
<dbReference type="PIR" id="S32825">
    <property type="entry name" value="S32825"/>
</dbReference>
<dbReference type="RefSeq" id="NP_776926.1">
    <property type="nucleotide sequence ID" value="NM_174501.2"/>
</dbReference>
<dbReference type="RefSeq" id="XP_015314096.1">
    <property type="nucleotide sequence ID" value="XM_015458610.1"/>
</dbReference>
<dbReference type="SMR" id="P27479"/>
<dbReference type="FunCoup" id="P27479">
    <property type="interactions" value="8"/>
</dbReference>
<dbReference type="STRING" id="9913.ENSBTAP00000015911"/>
<dbReference type="PaxDb" id="9913-ENSBTAP00000015911"/>
<dbReference type="PeptideAtlas" id="P27479"/>
<dbReference type="Ensembl" id="ENSBTAT00000015911.5">
    <property type="protein sequence ID" value="ENSBTAP00000015911.4"/>
    <property type="gene ID" value="ENSBTAG00000011990.7"/>
</dbReference>
<dbReference type="GeneID" id="282139"/>
<dbReference type="KEGG" id="bta:282139"/>
<dbReference type="CTD" id="246"/>
<dbReference type="VEuPathDB" id="HostDB:ENSBTAG00000011990"/>
<dbReference type="VGNC" id="VGNC:25843">
    <property type="gene designation" value="ALOX15"/>
</dbReference>
<dbReference type="eggNOG" id="ENOG502QQSP">
    <property type="taxonomic scope" value="Eukaryota"/>
</dbReference>
<dbReference type="GeneTree" id="ENSGT00940000162807"/>
<dbReference type="HOGENOM" id="CLU_004282_3_3_1"/>
<dbReference type="InParanoid" id="P27479"/>
<dbReference type="OMA" id="SFCPPED"/>
<dbReference type="OrthoDB" id="407298at2759"/>
<dbReference type="TreeFam" id="TF105320"/>
<dbReference type="Reactome" id="R-BTA-2142691">
    <property type="pathway name" value="Synthesis of Leukotrienes (LT) and Eoxins (EX)"/>
</dbReference>
<dbReference type="Reactome" id="R-BTA-2142712">
    <property type="pathway name" value="Synthesis of 12-eicosatetraenoic acid derivatives"/>
</dbReference>
<dbReference type="Reactome" id="R-BTA-2142770">
    <property type="pathway name" value="Synthesis of 15-eicosatetraenoic acid derivatives"/>
</dbReference>
<dbReference type="Reactome" id="R-BTA-9018677">
    <property type="pathway name" value="Biosynthesis of DHA-derived SPMs"/>
</dbReference>
<dbReference type="Reactome" id="R-BTA-9018681">
    <property type="pathway name" value="Biosynthesis of protectins"/>
</dbReference>
<dbReference type="Reactome" id="R-BTA-9018896">
    <property type="pathway name" value="Biosynthesis of E-series 18(S)-resolvins"/>
</dbReference>
<dbReference type="Reactome" id="R-BTA-9023661">
    <property type="pathway name" value="Biosynthesis of E-series 18(R)-resolvins"/>
</dbReference>
<dbReference type="Reactome" id="R-BTA-9025106">
    <property type="pathway name" value="Biosynthesis of DPAn-6 SPMs"/>
</dbReference>
<dbReference type="Reactome" id="R-BTA-9026286">
    <property type="pathway name" value="Biosynthesis of DPAn-3-derived protectins and resolvins"/>
</dbReference>
<dbReference type="UniPathway" id="UPA00881"/>
<dbReference type="Proteomes" id="UP000009136">
    <property type="component" value="Chromosome 19"/>
</dbReference>
<dbReference type="Bgee" id="ENSBTAG00000011990">
    <property type="expression patterns" value="Expressed in nasal cavity mucosa and 79 other cell types or tissues"/>
</dbReference>
<dbReference type="GO" id="GO:0009898">
    <property type="term" value="C:cytoplasmic side of plasma membrane"/>
    <property type="evidence" value="ECO:0000250"/>
    <property type="project" value="UniProtKB"/>
</dbReference>
<dbReference type="GO" id="GO:0005829">
    <property type="term" value="C:cytosol"/>
    <property type="evidence" value="ECO:0000250"/>
    <property type="project" value="UniProtKB"/>
</dbReference>
<dbReference type="GO" id="GO:0005811">
    <property type="term" value="C:lipid droplet"/>
    <property type="evidence" value="ECO:0000250"/>
    <property type="project" value="UniProtKB"/>
</dbReference>
<dbReference type="GO" id="GO:0016020">
    <property type="term" value="C:membrane"/>
    <property type="evidence" value="ECO:0000250"/>
    <property type="project" value="UniProtKB"/>
</dbReference>
<dbReference type="GO" id="GO:0005886">
    <property type="term" value="C:plasma membrane"/>
    <property type="evidence" value="ECO:0000250"/>
    <property type="project" value="UniProtKB"/>
</dbReference>
<dbReference type="GO" id="GO:0004052">
    <property type="term" value="F:arachidonate 12(S)-lipoxygenase activity"/>
    <property type="evidence" value="ECO:0000314"/>
    <property type="project" value="UniProtKB"/>
</dbReference>
<dbReference type="GO" id="GO:0050473">
    <property type="term" value="F:arachidonate 15-lipoxygenase activity"/>
    <property type="evidence" value="ECO:0000250"/>
    <property type="project" value="UniProtKB"/>
</dbReference>
<dbReference type="GO" id="GO:0005506">
    <property type="term" value="F:iron ion binding"/>
    <property type="evidence" value="ECO:0000250"/>
    <property type="project" value="UniProtKB"/>
</dbReference>
<dbReference type="GO" id="GO:0016165">
    <property type="term" value="F:linoleate 13S-lipoxygenase activity"/>
    <property type="evidence" value="ECO:0000250"/>
    <property type="project" value="UniProtKB"/>
</dbReference>
<dbReference type="GO" id="GO:0005546">
    <property type="term" value="F:phosphatidylinositol-4,5-bisphosphate binding"/>
    <property type="evidence" value="ECO:0000250"/>
    <property type="project" value="UniProtKB"/>
</dbReference>
<dbReference type="GO" id="GO:0043277">
    <property type="term" value="P:apoptotic cell clearance"/>
    <property type="evidence" value="ECO:0000250"/>
    <property type="project" value="UniProtKB"/>
</dbReference>
<dbReference type="GO" id="GO:0019369">
    <property type="term" value="P:arachidonate metabolic process"/>
    <property type="evidence" value="ECO:0000314"/>
    <property type="project" value="UniProtKB"/>
</dbReference>
<dbReference type="GO" id="GO:0030282">
    <property type="term" value="P:bone mineralization"/>
    <property type="evidence" value="ECO:0000250"/>
    <property type="project" value="UniProtKB"/>
</dbReference>
<dbReference type="GO" id="GO:0071277">
    <property type="term" value="P:cellular response to calcium ion"/>
    <property type="evidence" value="ECO:0000250"/>
    <property type="project" value="UniProtKB"/>
</dbReference>
<dbReference type="GO" id="GO:0035963">
    <property type="term" value="P:cellular response to interleukin-13"/>
    <property type="evidence" value="ECO:0000250"/>
    <property type="project" value="UniProtKB"/>
</dbReference>
<dbReference type="GO" id="GO:0019395">
    <property type="term" value="P:fatty acid oxidation"/>
    <property type="evidence" value="ECO:0000250"/>
    <property type="project" value="UniProtKB"/>
</dbReference>
<dbReference type="GO" id="GO:0043651">
    <property type="term" value="P:linoleic acid metabolic process"/>
    <property type="evidence" value="ECO:0000250"/>
    <property type="project" value="UniProtKB"/>
</dbReference>
<dbReference type="GO" id="GO:0034440">
    <property type="term" value="P:lipid oxidation"/>
    <property type="evidence" value="ECO:0000318"/>
    <property type="project" value="GO_Central"/>
</dbReference>
<dbReference type="GO" id="GO:2001303">
    <property type="term" value="P:lipoxin A4 biosynthetic process"/>
    <property type="evidence" value="ECO:0000250"/>
    <property type="project" value="UniProtKB"/>
</dbReference>
<dbReference type="GO" id="GO:0019372">
    <property type="term" value="P:lipoxygenase pathway"/>
    <property type="evidence" value="ECO:0000314"/>
    <property type="project" value="UniProtKB"/>
</dbReference>
<dbReference type="GO" id="GO:0002820">
    <property type="term" value="P:negative regulation of adaptive immune response"/>
    <property type="evidence" value="ECO:0000250"/>
    <property type="project" value="UniProtKB"/>
</dbReference>
<dbReference type="GO" id="GO:0001503">
    <property type="term" value="P:ossification"/>
    <property type="evidence" value="ECO:0000250"/>
    <property type="project" value="UniProtKB"/>
</dbReference>
<dbReference type="GO" id="GO:0006646">
    <property type="term" value="P:phosphatidylethanolamine biosynthetic process"/>
    <property type="evidence" value="ECO:0000250"/>
    <property type="project" value="UniProtKB"/>
</dbReference>
<dbReference type="GO" id="GO:0030838">
    <property type="term" value="P:positive regulation of actin filament polymerization"/>
    <property type="evidence" value="ECO:0000250"/>
    <property type="project" value="UniProtKB"/>
</dbReference>
<dbReference type="GO" id="GO:0010811">
    <property type="term" value="P:positive regulation of cell-substrate adhesion"/>
    <property type="evidence" value="ECO:0000250"/>
    <property type="project" value="UniProtKB"/>
</dbReference>
<dbReference type="GO" id="GO:0070374">
    <property type="term" value="P:positive regulation of ERK1 and ERK2 cascade"/>
    <property type="evidence" value="ECO:0000250"/>
    <property type="project" value="UniProtKB"/>
</dbReference>
<dbReference type="GO" id="GO:1901074">
    <property type="term" value="P:regulation of engulfment of apoptotic cell"/>
    <property type="evidence" value="ECO:0000250"/>
    <property type="project" value="UniProtKB"/>
</dbReference>
<dbReference type="GO" id="GO:0050727">
    <property type="term" value="P:regulation of inflammatory response"/>
    <property type="evidence" value="ECO:0000250"/>
    <property type="project" value="UniProtKB"/>
</dbReference>
<dbReference type="GO" id="GO:0035358">
    <property type="term" value="P:regulation of peroxisome proliferator activated receptor signaling pathway"/>
    <property type="evidence" value="ECO:0000250"/>
    <property type="project" value="UniProtKB"/>
</dbReference>
<dbReference type="GO" id="GO:0034976">
    <property type="term" value="P:response to endoplasmic reticulum stress"/>
    <property type="evidence" value="ECO:0000250"/>
    <property type="project" value="UniProtKB"/>
</dbReference>
<dbReference type="GO" id="GO:0042060">
    <property type="term" value="P:wound healing"/>
    <property type="evidence" value="ECO:0000250"/>
    <property type="project" value="UniProtKB"/>
</dbReference>
<dbReference type="CDD" id="cd01753">
    <property type="entry name" value="PLAT_LOX"/>
    <property type="match status" value="1"/>
</dbReference>
<dbReference type="FunFam" id="3.10.450.60:FF:000004">
    <property type="entry name" value="Arachidonate 12-lipoxygenase, 12S-type"/>
    <property type="match status" value="1"/>
</dbReference>
<dbReference type="FunFam" id="1.20.245.10:FF:000001">
    <property type="entry name" value="Arachidonate 5-lipoxygenase a"/>
    <property type="match status" value="1"/>
</dbReference>
<dbReference type="FunFam" id="2.60.60.20:FF:000002">
    <property type="entry name" value="Arachidonate 5-lipoxygenase a"/>
    <property type="match status" value="1"/>
</dbReference>
<dbReference type="Gene3D" id="3.10.450.60">
    <property type="match status" value="1"/>
</dbReference>
<dbReference type="Gene3D" id="1.20.245.10">
    <property type="entry name" value="Lipoxygenase-1, Domain 5"/>
    <property type="match status" value="1"/>
</dbReference>
<dbReference type="Gene3D" id="2.60.60.20">
    <property type="entry name" value="PLAT/LH2 domain"/>
    <property type="match status" value="1"/>
</dbReference>
<dbReference type="InterPro" id="IPR000907">
    <property type="entry name" value="LipOase"/>
</dbReference>
<dbReference type="InterPro" id="IPR013819">
    <property type="entry name" value="LipOase_C"/>
</dbReference>
<dbReference type="InterPro" id="IPR036226">
    <property type="entry name" value="LipOase_C_sf"/>
</dbReference>
<dbReference type="InterPro" id="IPR020834">
    <property type="entry name" value="LipOase_CS"/>
</dbReference>
<dbReference type="InterPro" id="IPR020833">
    <property type="entry name" value="LipOase_Fe_BS"/>
</dbReference>
<dbReference type="InterPro" id="IPR001885">
    <property type="entry name" value="LipOase_mml"/>
</dbReference>
<dbReference type="InterPro" id="IPR001024">
    <property type="entry name" value="PLAT/LH2_dom"/>
</dbReference>
<dbReference type="InterPro" id="IPR036392">
    <property type="entry name" value="PLAT/LH2_dom_sf"/>
</dbReference>
<dbReference type="InterPro" id="IPR042062">
    <property type="entry name" value="PLAT_LOX_verte"/>
</dbReference>
<dbReference type="PANTHER" id="PTHR11771">
    <property type="entry name" value="LIPOXYGENASE"/>
    <property type="match status" value="1"/>
</dbReference>
<dbReference type="Pfam" id="PF00305">
    <property type="entry name" value="Lipoxygenase"/>
    <property type="match status" value="1"/>
</dbReference>
<dbReference type="Pfam" id="PF01477">
    <property type="entry name" value="PLAT"/>
    <property type="match status" value="1"/>
</dbReference>
<dbReference type="PRINTS" id="PR00087">
    <property type="entry name" value="LIPOXYGENASE"/>
</dbReference>
<dbReference type="PRINTS" id="PR00467">
    <property type="entry name" value="MAMLPOXGNASE"/>
</dbReference>
<dbReference type="SMART" id="SM00308">
    <property type="entry name" value="LH2"/>
    <property type="match status" value="1"/>
</dbReference>
<dbReference type="SUPFAM" id="SSF49723">
    <property type="entry name" value="Lipase/lipooxygenase domain (PLAT/LH2 domain)"/>
    <property type="match status" value="1"/>
</dbReference>
<dbReference type="SUPFAM" id="SSF48484">
    <property type="entry name" value="Lipoxigenase"/>
    <property type="match status" value="1"/>
</dbReference>
<dbReference type="PROSITE" id="PS00711">
    <property type="entry name" value="LIPOXYGENASE_1"/>
    <property type="match status" value="1"/>
</dbReference>
<dbReference type="PROSITE" id="PS00081">
    <property type="entry name" value="LIPOXYGENASE_2"/>
    <property type="match status" value="1"/>
</dbReference>
<dbReference type="PROSITE" id="PS51393">
    <property type="entry name" value="LIPOXYGENASE_3"/>
    <property type="match status" value="1"/>
</dbReference>
<dbReference type="PROSITE" id="PS50095">
    <property type="entry name" value="PLAT"/>
    <property type="match status" value="1"/>
</dbReference>